<protein>
    <recommendedName>
        <fullName>UPF0231 protein YacL</fullName>
    </recommendedName>
</protein>
<evidence type="ECO:0000305" key="1"/>
<comment type="similarity">
    <text evidence="1">Belongs to the UPF0231 family.</text>
</comment>
<comment type="sequence caution" evidence="1">
    <conflict type="erroneous initiation">
        <sequence resource="EMBL-CDS" id="AAN78642"/>
    </conflict>
</comment>
<proteinExistence type="inferred from homology"/>
<feature type="chain" id="PRO_0000214648" description="UPF0231 protein YacL">
    <location>
        <begin position="1"/>
        <end position="120"/>
    </location>
</feature>
<keyword id="KW-1185">Reference proteome</keyword>
<accession>Q8FL40</accession>
<gene>
    <name type="primary">yacL</name>
    <name type="ordered locus">c0148</name>
</gene>
<reference key="1">
    <citation type="journal article" date="2002" name="Proc. Natl. Acad. Sci. U.S.A.">
        <title>Extensive mosaic structure revealed by the complete genome sequence of uropathogenic Escherichia coli.</title>
        <authorList>
            <person name="Welch R.A."/>
            <person name="Burland V."/>
            <person name="Plunkett G. III"/>
            <person name="Redford P."/>
            <person name="Roesch P."/>
            <person name="Rasko D."/>
            <person name="Buckles E.L."/>
            <person name="Liou S.-R."/>
            <person name="Boutin A."/>
            <person name="Hackett J."/>
            <person name="Stroud D."/>
            <person name="Mayhew G.F."/>
            <person name="Rose D.J."/>
            <person name="Zhou S."/>
            <person name="Schwartz D.C."/>
            <person name="Perna N.T."/>
            <person name="Mobley H.L.T."/>
            <person name="Donnenberg M.S."/>
            <person name="Blattner F.R."/>
        </authorList>
    </citation>
    <scope>NUCLEOTIDE SEQUENCE [LARGE SCALE GENOMIC DNA]</scope>
    <source>
        <strain>CFT073 / ATCC 700928 / UPEC</strain>
    </source>
</reference>
<sequence>MDYEFLRDITGVVKVRMSMGHEVVGHWFNEEVKENLALLDEVEDAARTLKGSERSWQRAGHEYTLWMDGEEVMVRANQLEFAGDEMEEGMNYYDEESLSLCGVEDFLQVVAAYRNFVQQK</sequence>
<organism>
    <name type="scientific">Escherichia coli O6:H1 (strain CFT073 / ATCC 700928 / UPEC)</name>
    <dbReference type="NCBI Taxonomy" id="199310"/>
    <lineage>
        <taxon>Bacteria</taxon>
        <taxon>Pseudomonadati</taxon>
        <taxon>Pseudomonadota</taxon>
        <taxon>Gammaproteobacteria</taxon>
        <taxon>Enterobacterales</taxon>
        <taxon>Enterobacteriaceae</taxon>
        <taxon>Escherichia</taxon>
    </lineage>
</organism>
<dbReference type="EMBL" id="AE014075">
    <property type="protein sequence ID" value="AAN78642.1"/>
    <property type="status" value="ALT_INIT"/>
    <property type="molecule type" value="Genomic_DNA"/>
</dbReference>
<dbReference type="RefSeq" id="WP_000384304.1">
    <property type="nucleotide sequence ID" value="NZ_CP051263.1"/>
</dbReference>
<dbReference type="STRING" id="199310.c0148"/>
<dbReference type="KEGG" id="ecc:c0148"/>
<dbReference type="eggNOG" id="COG3112">
    <property type="taxonomic scope" value="Bacteria"/>
</dbReference>
<dbReference type="HOGENOM" id="CLU_139226_0_0_6"/>
<dbReference type="Proteomes" id="UP000001410">
    <property type="component" value="Chromosome"/>
</dbReference>
<dbReference type="HAMAP" id="MF_01053">
    <property type="entry name" value="UPF0231"/>
    <property type="match status" value="1"/>
</dbReference>
<dbReference type="InterPro" id="IPR008249">
    <property type="entry name" value="UPF0231"/>
</dbReference>
<dbReference type="NCBIfam" id="NF003574">
    <property type="entry name" value="PRK05248.1-1"/>
    <property type="match status" value="1"/>
</dbReference>
<dbReference type="NCBIfam" id="NF003576">
    <property type="entry name" value="PRK05248.1-3"/>
    <property type="match status" value="1"/>
</dbReference>
<dbReference type="Pfam" id="PF06062">
    <property type="entry name" value="UPF0231"/>
    <property type="match status" value="1"/>
</dbReference>
<dbReference type="PIRSF" id="PIRSF006287">
    <property type="entry name" value="UCP006287"/>
    <property type="match status" value="1"/>
</dbReference>
<name>YACL_ECOL6</name>